<sequence>MIQPLVKASRPRLWVCSDCLLRRTLSPLLRQQRRRFTGFTAHAPKTLTGTIPVTHKNGDTKHDDSLLRSIFDSPETWKQFSGDKHGRNVGLFRNAYLTSPHGFLDFAHVSLGKARALVDKVLNAQSLDEYRAIVRHLDRLSDILCRVLDMADFVRVTHPDQQIQRTASMAWDMMYEYMNQLNTMTGLYDQLVQAMDNPQVSTTWSEEERMVAEVLKLDFAKSAVHLPKDARDKFVHLSSAISQTGTNFIQHMEPKIPYTTVEKSRMMGMDPVEVKRMASMGKVYVQTLSPQASIALRTVRDDHARHQLFMASRTASRRTVHTLEELMLLRGESAKLSGFESYGHLVLHDRMMASTPESVRQFLQALSENTRPQAQQEVADLTAAKRAHKGGDATLEPWDKDFYAESIRQAIKSRQKREDLSSYFSLGTVMQGLSRIFTRLYGIRFVPREPMPGETWHPDVRRLDVVSDVEGHVAVLYCDLFYRPLKSPNPAHFTLRCSRELSPHEIAETAHTQAENPHVLIPSFESAEFAANDGMAYSRSQDGAIKQLPTIALVCDFPQQSHNRPALLSFFQLETLFHEMGHAIHSILARTSFQNVSGTRCATDLAELPSTLMEYFAADPSVLALFARHYETDNPLPYEWVDNKIREARRFEALDTENQIILAMLDQELHSSKAVQGHIDSTEIFHSLQRQFSTAPPDPQGTAWQGFFGHLVGYGSTYYSYLFDRVLAQRVWNVVFNSGQGGAALQRENGERLKENLLKWGGSKDPWKCLAGALKDERLEGGGEKAMKLVGSWGGQRGTKSDQAV</sequence>
<protein>
    <recommendedName>
        <fullName>Mitochondrial intermediate peptidase</fullName>
        <shortName>MIP</shortName>
        <ecNumber>3.4.24.59</ecNumber>
    </recommendedName>
    <alternativeName>
        <fullName>Octapeptidyl aminopeptidase</fullName>
    </alternativeName>
</protein>
<dbReference type="EC" id="3.4.24.59"/>
<dbReference type="EMBL" id="CM002236">
    <property type="protein sequence ID" value="EAA34783.1"/>
    <property type="molecule type" value="Genomic_DNA"/>
</dbReference>
<dbReference type="RefSeq" id="XP_964019.1">
    <property type="nucleotide sequence ID" value="XM_958926.2"/>
</dbReference>
<dbReference type="SMR" id="Q7SDD5"/>
<dbReference type="FunCoup" id="Q7SDD5">
    <property type="interactions" value="629"/>
</dbReference>
<dbReference type="STRING" id="367110.Q7SDD5"/>
<dbReference type="PaxDb" id="5141-EFNCRP00000001042"/>
<dbReference type="EnsemblFungi" id="EAA34783">
    <property type="protein sequence ID" value="EAA34783"/>
    <property type="gene ID" value="NCU02063"/>
</dbReference>
<dbReference type="GeneID" id="3880168"/>
<dbReference type="KEGG" id="ncr:NCU02063"/>
<dbReference type="VEuPathDB" id="FungiDB:NCU02063"/>
<dbReference type="HOGENOM" id="CLU_001805_0_0_1"/>
<dbReference type="InParanoid" id="Q7SDD5"/>
<dbReference type="OrthoDB" id="17530at2759"/>
<dbReference type="Proteomes" id="UP000001805">
    <property type="component" value="Chromosome 1, Linkage Group I"/>
</dbReference>
<dbReference type="GO" id="GO:0005759">
    <property type="term" value="C:mitochondrial matrix"/>
    <property type="evidence" value="ECO:0007669"/>
    <property type="project" value="UniProtKB-SubCell"/>
</dbReference>
<dbReference type="GO" id="GO:0005739">
    <property type="term" value="C:mitochondrion"/>
    <property type="evidence" value="ECO:0000318"/>
    <property type="project" value="GO_Central"/>
</dbReference>
<dbReference type="GO" id="GO:0046872">
    <property type="term" value="F:metal ion binding"/>
    <property type="evidence" value="ECO:0007669"/>
    <property type="project" value="UniProtKB-KW"/>
</dbReference>
<dbReference type="GO" id="GO:0004222">
    <property type="term" value="F:metalloendopeptidase activity"/>
    <property type="evidence" value="ECO:0000318"/>
    <property type="project" value="GO_Central"/>
</dbReference>
<dbReference type="GO" id="GO:0006518">
    <property type="term" value="P:peptide metabolic process"/>
    <property type="evidence" value="ECO:0000318"/>
    <property type="project" value="GO_Central"/>
</dbReference>
<dbReference type="GO" id="GO:0006627">
    <property type="term" value="P:protein processing involved in protein targeting to mitochondrion"/>
    <property type="evidence" value="ECO:0000318"/>
    <property type="project" value="GO_Central"/>
</dbReference>
<dbReference type="CDD" id="cd06457">
    <property type="entry name" value="M3A_MIP"/>
    <property type="match status" value="1"/>
</dbReference>
<dbReference type="Gene3D" id="3.40.390.10">
    <property type="entry name" value="Collagenase (Catalytic Domain)"/>
    <property type="match status" value="1"/>
</dbReference>
<dbReference type="Gene3D" id="1.10.1370.10">
    <property type="entry name" value="Neurolysin, domain 3"/>
    <property type="match status" value="1"/>
</dbReference>
<dbReference type="InterPro" id="IPR033851">
    <property type="entry name" value="M3A_MIP"/>
</dbReference>
<dbReference type="InterPro" id="IPR024079">
    <property type="entry name" value="MetalloPept_cat_dom_sf"/>
</dbReference>
<dbReference type="InterPro" id="IPR024077">
    <property type="entry name" value="Neurolysin/TOP_dom2"/>
</dbReference>
<dbReference type="InterPro" id="IPR045090">
    <property type="entry name" value="Pept_M3A_M3B"/>
</dbReference>
<dbReference type="InterPro" id="IPR001567">
    <property type="entry name" value="Pept_M3A_M3B_dom"/>
</dbReference>
<dbReference type="PANTHER" id="PTHR11804:SF79">
    <property type="entry name" value="MITOCHONDRIAL INTERMEDIATE PEPTIDASE"/>
    <property type="match status" value="1"/>
</dbReference>
<dbReference type="PANTHER" id="PTHR11804">
    <property type="entry name" value="PROTEASE M3 THIMET OLIGOPEPTIDASE-RELATED"/>
    <property type="match status" value="1"/>
</dbReference>
<dbReference type="Pfam" id="PF01432">
    <property type="entry name" value="Peptidase_M3"/>
    <property type="match status" value="1"/>
</dbReference>
<dbReference type="SUPFAM" id="SSF55486">
    <property type="entry name" value="Metalloproteases ('zincins'), catalytic domain"/>
    <property type="match status" value="1"/>
</dbReference>
<dbReference type="PROSITE" id="PS00142">
    <property type="entry name" value="ZINC_PROTEASE"/>
    <property type="match status" value="1"/>
</dbReference>
<comment type="function">
    <text evidence="1">Cleaves proteins, imported into the mitochondrion, to their mature size. While most mitochondrial precursor proteins are processed to the mature form in one step by mitochondrial processing peptidase (MPP), the sequential cleavage by MIP of an octapeptide after initial processing by MPP is a required step for a subgroup of nuclear-encoded precursor proteins destined for the matrix or the inner membrane (By similarity).</text>
</comment>
<comment type="catalytic activity">
    <reaction>
        <text>Release of an N-terminal octapeptide as second stage of processing of some proteins imported into the mitochondrion.</text>
        <dbReference type="EC" id="3.4.24.59"/>
    </reaction>
</comment>
<comment type="cofactor">
    <cofactor evidence="1">
        <name>Zn(2+)</name>
        <dbReference type="ChEBI" id="CHEBI:29105"/>
    </cofactor>
    <text evidence="1">Binds 1 zinc ion.</text>
</comment>
<comment type="subcellular location">
    <subcellularLocation>
        <location evidence="1">Mitochondrion matrix</location>
    </subcellularLocation>
</comment>
<comment type="similarity">
    <text evidence="4">Belongs to the peptidase M3 family.</text>
</comment>
<proteinExistence type="inferred from homology"/>
<organism>
    <name type="scientific">Neurospora crassa (strain ATCC 24698 / 74-OR23-1A / CBS 708.71 / DSM 1257 / FGSC 987)</name>
    <dbReference type="NCBI Taxonomy" id="367110"/>
    <lineage>
        <taxon>Eukaryota</taxon>
        <taxon>Fungi</taxon>
        <taxon>Dikarya</taxon>
        <taxon>Ascomycota</taxon>
        <taxon>Pezizomycotina</taxon>
        <taxon>Sordariomycetes</taxon>
        <taxon>Sordariomycetidae</taxon>
        <taxon>Sordariales</taxon>
        <taxon>Sordariaceae</taxon>
        <taxon>Neurospora</taxon>
    </lineage>
</organism>
<reference key="1">
    <citation type="journal article" date="2003" name="Nature">
        <title>The genome sequence of the filamentous fungus Neurospora crassa.</title>
        <authorList>
            <person name="Galagan J.E."/>
            <person name="Calvo S.E."/>
            <person name="Borkovich K.A."/>
            <person name="Selker E.U."/>
            <person name="Read N.D."/>
            <person name="Jaffe D.B."/>
            <person name="FitzHugh W."/>
            <person name="Ma L.-J."/>
            <person name="Smirnov S."/>
            <person name="Purcell S."/>
            <person name="Rehman B."/>
            <person name="Elkins T."/>
            <person name="Engels R."/>
            <person name="Wang S."/>
            <person name="Nielsen C.B."/>
            <person name="Butler J."/>
            <person name="Endrizzi M."/>
            <person name="Qui D."/>
            <person name="Ianakiev P."/>
            <person name="Bell-Pedersen D."/>
            <person name="Nelson M.A."/>
            <person name="Werner-Washburne M."/>
            <person name="Selitrennikoff C.P."/>
            <person name="Kinsey J.A."/>
            <person name="Braun E.L."/>
            <person name="Zelter A."/>
            <person name="Schulte U."/>
            <person name="Kothe G.O."/>
            <person name="Jedd G."/>
            <person name="Mewes H.-W."/>
            <person name="Staben C."/>
            <person name="Marcotte E."/>
            <person name="Greenberg D."/>
            <person name="Roy A."/>
            <person name="Foley K."/>
            <person name="Naylor J."/>
            <person name="Stange-Thomann N."/>
            <person name="Barrett R."/>
            <person name="Gnerre S."/>
            <person name="Kamal M."/>
            <person name="Kamvysselis M."/>
            <person name="Mauceli E.W."/>
            <person name="Bielke C."/>
            <person name="Rudd S."/>
            <person name="Frishman D."/>
            <person name="Krystofova S."/>
            <person name="Rasmussen C."/>
            <person name="Metzenberg R.L."/>
            <person name="Perkins D.D."/>
            <person name="Kroken S."/>
            <person name="Cogoni C."/>
            <person name="Macino G."/>
            <person name="Catcheside D.E.A."/>
            <person name="Li W."/>
            <person name="Pratt R.J."/>
            <person name="Osmani S.A."/>
            <person name="DeSouza C.P.C."/>
            <person name="Glass N.L."/>
            <person name="Orbach M.J."/>
            <person name="Berglund J.A."/>
            <person name="Voelker R."/>
            <person name="Yarden O."/>
            <person name="Plamann M."/>
            <person name="Seiler S."/>
            <person name="Dunlap J.C."/>
            <person name="Radford A."/>
            <person name="Aramayo R."/>
            <person name="Natvig D.O."/>
            <person name="Alex L.A."/>
            <person name="Mannhaupt G."/>
            <person name="Ebbole D.J."/>
            <person name="Freitag M."/>
            <person name="Paulsen I."/>
            <person name="Sachs M.S."/>
            <person name="Lander E.S."/>
            <person name="Nusbaum C."/>
            <person name="Birren B.W."/>
        </authorList>
    </citation>
    <scope>NUCLEOTIDE SEQUENCE [LARGE SCALE GENOMIC DNA]</scope>
    <source>
        <strain>ATCC 24698 / 74-OR23-1A / CBS 708.71 / DSM 1257 / FGSC 987</strain>
    </source>
</reference>
<gene>
    <name type="primary">oct-1</name>
    <name type="ORF">NCU02063</name>
</gene>
<feature type="transit peptide" description="Mitochondrion" evidence="2">
    <location>
        <begin position="1"/>
        <end position="25"/>
    </location>
</feature>
<feature type="chain" id="PRO_0000338590" description="Mitochondrial intermediate peptidase">
    <location>
        <begin position="26"/>
        <end position="805"/>
    </location>
</feature>
<feature type="active site" evidence="3">
    <location>
        <position position="579"/>
    </location>
</feature>
<feature type="binding site" evidence="3">
    <location>
        <position position="578"/>
    </location>
    <ligand>
        <name>Zn(2+)</name>
        <dbReference type="ChEBI" id="CHEBI:29105"/>
        <note>catalytic</note>
    </ligand>
</feature>
<feature type="binding site" evidence="3">
    <location>
        <position position="582"/>
    </location>
    <ligand>
        <name>Zn(2+)</name>
        <dbReference type="ChEBI" id="CHEBI:29105"/>
        <note>catalytic</note>
    </ligand>
</feature>
<feature type="binding site" evidence="3">
    <location>
        <position position="585"/>
    </location>
    <ligand>
        <name>Zn(2+)</name>
        <dbReference type="ChEBI" id="CHEBI:29105"/>
        <note>catalytic</note>
    </ligand>
</feature>
<name>PMIP_NEUCR</name>
<accession>Q7SDD5</accession>
<evidence type="ECO:0000250" key="1"/>
<evidence type="ECO:0000255" key="2"/>
<evidence type="ECO:0000255" key="3">
    <source>
        <dbReference type="PROSITE-ProRule" id="PRU10095"/>
    </source>
</evidence>
<evidence type="ECO:0000305" key="4"/>
<keyword id="KW-0378">Hydrolase</keyword>
<keyword id="KW-0479">Metal-binding</keyword>
<keyword id="KW-0482">Metalloprotease</keyword>
<keyword id="KW-0496">Mitochondrion</keyword>
<keyword id="KW-0645">Protease</keyword>
<keyword id="KW-1185">Reference proteome</keyword>
<keyword id="KW-0809">Transit peptide</keyword>
<keyword id="KW-0862">Zinc</keyword>